<organism>
    <name type="scientific">Mus musculus</name>
    <name type="common">Mouse</name>
    <dbReference type="NCBI Taxonomy" id="10090"/>
    <lineage>
        <taxon>Eukaryota</taxon>
        <taxon>Metazoa</taxon>
        <taxon>Chordata</taxon>
        <taxon>Craniata</taxon>
        <taxon>Vertebrata</taxon>
        <taxon>Euteleostomi</taxon>
        <taxon>Mammalia</taxon>
        <taxon>Eutheria</taxon>
        <taxon>Euarchontoglires</taxon>
        <taxon>Glires</taxon>
        <taxon>Rodentia</taxon>
        <taxon>Myomorpha</taxon>
        <taxon>Muroidea</taxon>
        <taxon>Muridae</taxon>
        <taxon>Murinae</taxon>
        <taxon>Mus</taxon>
        <taxon>Mus</taxon>
    </lineage>
</organism>
<evidence type="ECO:0000250" key="1"/>
<evidence type="ECO:0000250" key="2">
    <source>
        <dbReference type="UniProtKB" id="Q28024"/>
    </source>
</evidence>
<evidence type="ECO:0000305" key="3"/>
<evidence type="ECO:0007744" key="4">
    <source>
    </source>
</evidence>
<evidence type="ECO:0007744" key="5">
    <source>
    </source>
</evidence>
<keyword id="KW-0007">Acetylation</keyword>
<keyword id="KW-1003">Cell membrane</keyword>
<keyword id="KW-0449">Lipoprotein</keyword>
<keyword id="KW-0472">Membrane</keyword>
<keyword id="KW-0488">Methylation</keyword>
<keyword id="KW-0597">Phosphoprotein</keyword>
<keyword id="KW-0636">Prenylation</keyword>
<keyword id="KW-1185">Reference proteome</keyword>
<keyword id="KW-0807">Transducer</keyword>
<proteinExistence type="evidence at protein level"/>
<gene>
    <name type="primary">Gng12</name>
</gene>
<dbReference type="EMBL" id="AK005561">
    <property type="protein sequence ID" value="BAB24121.1"/>
    <property type="molecule type" value="mRNA"/>
</dbReference>
<dbReference type="EMBL" id="AK033422">
    <property type="protein sequence ID" value="BAC28280.1"/>
    <property type="molecule type" value="mRNA"/>
</dbReference>
<dbReference type="EMBL" id="AK148765">
    <property type="protein sequence ID" value="BAE28660.1"/>
    <property type="molecule type" value="mRNA"/>
</dbReference>
<dbReference type="EMBL" id="AK159872">
    <property type="protein sequence ID" value="BAE35445.1"/>
    <property type="molecule type" value="mRNA"/>
</dbReference>
<dbReference type="EMBL" id="AK162342">
    <property type="protein sequence ID" value="BAE36863.1"/>
    <property type="molecule type" value="mRNA"/>
</dbReference>
<dbReference type="EMBL" id="AK166035">
    <property type="protein sequence ID" value="BAE38536.1"/>
    <property type="molecule type" value="mRNA"/>
</dbReference>
<dbReference type="EMBL" id="AK166299">
    <property type="protein sequence ID" value="BAE38688.1"/>
    <property type="molecule type" value="mRNA"/>
</dbReference>
<dbReference type="EMBL" id="BC040685">
    <property type="protein sequence ID" value="AAH40685.1"/>
    <property type="molecule type" value="mRNA"/>
</dbReference>
<dbReference type="CCDS" id="CCDS39502.1"/>
<dbReference type="RefSeq" id="NP_001171027.1">
    <property type="nucleotide sequence ID" value="NM_001177556.1"/>
</dbReference>
<dbReference type="RefSeq" id="NP_001171028.1">
    <property type="nucleotide sequence ID" value="NM_001177557.1"/>
</dbReference>
<dbReference type="RefSeq" id="NP_001171029.1">
    <property type="nucleotide sequence ID" value="NM_001177558.1"/>
</dbReference>
<dbReference type="RefSeq" id="NP_001171030.1">
    <property type="nucleotide sequence ID" value="NM_001177559.1"/>
</dbReference>
<dbReference type="RefSeq" id="NP_001171031.1">
    <property type="nucleotide sequence ID" value="NM_001177560.1"/>
</dbReference>
<dbReference type="RefSeq" id="NP_079554.1">
    <property type="nucleotide sequence ID" value="NM_025278.5"/>
</dbReference>
<dbReference type="RefSeq" id="XP_006505605.1">
    <property type="nucleotide sequence ID" value="XM_006505542.3"/>
</dbReference>
<dbReference type="RefSeq" id="XP_036021738.1">
    <property type="nucleotide sequence ID" value="XM_036165845.1"/>
</dbReference>
<dbReference type="RefSeq" id="XP_036021739.1">
    <property type="nucleotide sequence ID" value="XM_036165846.1"/>
</dbReference>
<dbReference type="RefSeq" id="XP_036021741.1">
    <property type="nucleotide sequence ID" value="XM_036165848.1"/>
</dbReference>
<dbReference type="SMR" id="Q9DAS9"/>
<dbReference type="BioGRID" id="199985">
    <property type="interactions" value="18"/>
</dbReference>
<dbReference type="FunCoup" id="Q9DAS9">
    <property type="interactions" value="907"/>
</dbReference>
<dbReference type="IntAct" id="Q9DAS9">
    <property type="interactions" value="4"/>
</dbReference>
<dbReference type="STRING" id="10090.ENSMUSP00000046557"/>
<dbReference type="iPTMnet" id="Q9DAS9"/>
<dbReference type="PhosphoSitePlus" id="Q9DAS9"/>
<dbReference type="jPOST" id="Q9DAS9"/>
<dbReference type="PaxDb" id="10090-ENSMUSP00000109863"/>
<dbReference type="PeptideAtlas" id="Q9DAS9"/>
<dbReference type="ProteomicsDB" id="273418"/>
<dbReference type="Pumba" id="Q9DAS9"/>
<dbReference type="TopDownProteomics" id="Q9DAS9"/>
<dbReference type="Antibodypedia" id="33413">
    <property type="antibodies" value="60 antibodies from 22 providers"/>
</dbReference>
<dbReference type="DNASU" id="14701"/>
<dbReference type="Ensembl" id="ENSMUST00000043148.13">
    <property type="protein sequence ID" value="ENSMUSP00000046557.7"/>
    <property type="gene ID" value="ENSMUSG00000036402.14"/>
</dbReference>
<dbReference type="Ensembl" id="ENSMUST00000114222.4">
    <property type="protein sequence ID" value="ENSMUSP00000109860.2"/>
    <property type="gene ID" value="ENSMUSG00000036402.14"/>
</dbReference>
<dbReference type="Ensembl" id="ENSMUST00000114224.8">
    <property type="protein sequence ID" value="ENSMUSP00000109862.2"/>
    <property type="gene ID" value="ENSMUSG00000036402.14"/>
</dbReference>
<dbReference type="Ensembl" id="ENSMUST00000114225.8">
    <property type="protein sequence ID" value="ENSMUSP00000109863.2"/>
    <property type="gene ID" value="ENSMUSG00000036402.14"/>
</dbReference>
<dbReference type="Ensembl" id="ENSMUST00000114226.8">
    <property type="protein sequence ID" value="ENSMUSP00000109864.2"/>
    <property type="gene ID" value="ENSMUSG00000036402.14"/>
</dbReference>
<dbReference type="Ensembl" id="ENSMUST00000114227.8">
    <property type="protein sequence ID" value="ENSMUSP00000109865.2"/>
    <property type="gene ID" value="ENSMUSG00000036402.14"/>
</dbReference>
<dbReference type="Ensembl" id="ENSMUST00000114228.8">
    <property type="protein sequence ID" value="ENSMUSP00000109866.2"/>
    <property type="gene ID" value="ENSMUSG00000036402.14"/>
</dbReference>
<dbReference type="GeneID" id="14701"/>
<dbReference type="KEGG" id="mmu:14701"/>
<dbReference type="UCSC" id="uc009cew.2">
    <property type="organism name" value="mouse"/>
</dbReference>
<dbReference type="AGR" id="MGI:1336171"/>
<dbReference type="CTD" id="55970"/>
<dbReference type="MGI" id="MGI:1336171">
    <property type="gene designation" value="Gng12"/>
</dbReference>
<dbReference type="VEuPathDB" id="HostDB:ENSMUSG00000036402"/>
<dbReference type="eggNOG" id="KOG4119">
    <property type="taxonomic scope" value="Eukaryota"/>
</dbReference>
<dbReference type="GeneTree" id="ENSGT01100000263497"/>
<dbReference type="HOGENOM" id="CLU_168377_3_1_1"/>
<dbReference type="InParanoid" id="Q9DAS9"/>
<dbReference type="OMA" id="QEKKSCA"/>
<dbReference type="OrthoDB" id="29327at9989"/>
<dbReference type="PhylomeDB" id="Q9DAS9"/>
<dbReference type="TreeFam" id="TF319909"/>
<dbReference type="Reactome" id="R-MMU-1296041">
    <property type="pathway name" value="Activation of G protein gated Potassium channels"/>
</dbReference>
<dbReference type="Reactome" id="R-MMU-202040">
    <property type="pathway name" value="G-protein activation"/>
</dbReference>
<dbReference type="Reactome" id="R-MMU-381676">
    <property type="pathway name" value="Glucagon-like Peptide-1 (GLP1) regulates insulin secretion"/>
</dbReference>
<dbReference type="Reactome" id="R-MMU-392170">
    <property type="pathway name" value="ADP signalling through P2Y purinoceptor 12"/>
</dbReference>
<dbReference type="Reactome" id="R-MMU-392451">
    <property type="pathway name" value="G beta:gamma signalling through PI3Kgamma"/>
</dbReference>
<dbReference type="Reactome" id="R-MMU-392851">
    <property type="pathway name" value="Prostacyclin signalling through prostacyclin receptor"/>
</dbReference>
<dbReference type="Reactome" id="R-MMU-400042">
    <property type="pathway name" value="Adrenaline,noradrenaline inhibits insulin secretion"/>
</dbReference>
<dbReference type="Reactome" id="R-MMU-4086398">
    <property type="pathway name" value="Ca2+ pathway"/>
</dbReference>
<dbReference type="Reactome" id="R-MMU-416476">
    <property type="pathway name" value="G alpha (q) signalling events"/>
</dbReference>
<dbReference type="Reactome" id="R-MMU-416482">
    <property type="pathway name" value="G alpha (12/13) signalling events"/>
</dbReference>
<dbReference type="Reactome" id="R-MMU-418217">
    <property type="pathway name" value="G beta:gamma signalling through PLC beta"/>
</dbReference>
<dbReference type="Reactome" id="R-MMU-418555">
    <property type="pathway name" value="G alpha (s) signalling events"/>
</dbReference>
<dbReference type="Reactome" id="R-MMU-418592">
    <property type="pathway name" value="ADP signalling through P2Y purinoceptor 1"/>
</dbReference>
<dbReference type="Reactome" id="R-MMU-418594">
    <property type="pathway name" value="G alpha (i) signalling events"/>
</dbReference>
<dbReference type="Reactome" id="R-MMU-418597">
    <property type="pathway name" value="G alpha (z) signalling events"/>
</dbReference>
<dbReference type="Reactome" id="R-MMU-420092">
    <property type="pathway name" value="Glucagon-type ligand receptors"/>
</dbReference>
<dbReference type="Reactome" id="R-MMU-428930">
    <property type="pathway name" value="Thromboxane signalling through TP receptor"/>
</dbReference>
<dbReference type="Reactome" id="R-MMU-432040">
    <property type="pathway name" value="Vasopressin regulates renal water homeostasis via Aquaporins"/>
</dbReference>
<dbReference type="Reactome" id="R-MMU-456926">
    <property type="pathway name" value="Thrombin signalling through proteinase activated receptors (PARs)"/>
</dbReference>
<dbReference type="Reactome" id="R-MMU-500657">
    <property type="pathway name" value="Presynaptic function of Kainate receptors"/>
</dbReference>
<dbReference type="Reactome" id="R-MMU-6814122">
    <property type="pathway name" value="Cooperation of PDCL (PhLP1) and TRiC/CCT in G-protein beta folding"/>
</dbReference>
<dbReference type="Reactome" id="R-MMU-8964315">
    <property type="pathway name" value="G beta:gamma signalling through BTK"/>
</dbReference>
<dbReference type="Reactome" id="R-MMU-8964616">
    <property type="pathway name" value="G beta:gamma signalling through CDC42"/>
</dbReference>
<dbReference type="Reactome" id="R-MMU-9009391">
    <property type="pathway name" value="Extra-nuclear estrogen signaling"/>
</dbReference>
<dbReference type="Reactome" id="R-MMU-9634597">
    <property type="pathway name" value="GPER1 signaling"/>
</dbReference>
<dbReference type="Reactome" id="R-MMU-9856530">
    <property type="pathway name" value="High laminar flow shear stress activates signaling by PIEZO1 and PECAM1:CDH5:KDR in endothelial cells"/>
</dbReference>
<dbReference type="Reactome" id="R-MMU-997272">
    <property type="pathway name" value="Inhibition of voltage gated Ca2+ channels via Gbeta/gamma subunits"/>
</dbReference>
<dbReference type="BioGRID-ORCS" id="14701">
    <property type="hits" value="6 hits in 77 CRISPR screens"/>
</dbReference>
<dbReference type="CD-CODE" id="CE726F99">
    <property type="entry name" value="Postsynaptic density"/>
</dbReference>
<dbReference type="ChiTaRS" id="Gng12">
    <property type="organism name" value="mouse"/>
</dbReference>
<dbReference type="PRO" id="PR:Q9DAS9"/>
<dbReference type="Proteomes" id="UP000000589">
    <property type="component" value="Chromosome 6"/>
</dbReference>
<dbReference type="RNAct" id="Q9DAS9">
    <property type="molecule type" value="protein"/>
</dbReference>
<dbReference type="Bgee" id="ENSMUSG00000036402">
    <property type="expression patterns" value="Expressed in gastrula and 272 other cell types or tissues"/>
</dbReference>
<dbReference type="ExpressionAtlas" id="Q9DAS9">
    <property type="expression patterns" value="baseline and differential"/>
</dbReference>
<dbReference type="GO" id="GO:0005834">
    <property type="term" value="C:heterotrimeric G-protein complex"/>
    <property type="evidence" value="ECO:0007669"/>
    <property type="project" value="InterPro"/>
</dbReference>
<dbReference type="GO" id="GO:0045202">
    <property type="term" value="C:synapse"/>
    <property type="evidence" value="ECO:0000314"/>
    <property type="project" value="SynGO"/>
</dbReference>
<dbReference type="GO" id="GO:0031681">
    <property type="term" value="F:G-protein beta-subunit binding"/>
    <property type="evidence" value="ECO:0007669"/>
    <property type="project" value="InterPro"/>
</dbReference>
<dbReference type="GO" id="GO:0030165">
    <property type="term" value="F:PDZ domain binding"/>
    <property type="evidence" value="ECO:0000266"/>
    <property type="project" value="MGI"/>
</dbReference>
<dbReference type="GO" id="GO:0007186">
    <property type="term" value="P:G protein-coupled receptor signaling pathway"/>
    <property type="evidence" value="ECO:0007669"/>
    <property type="project" value="InterPro"/>
</dbReference>
<dbReference type="CDD" id="cd00068">
    <property type="entry name" value="GGL"/>
    <property type="match status" value="1"/>
</dbReference>
<dbReference type="FunFam" id="4.10.260.10:FF:000001">
    <property type="entry name" value="Guanine nucleotide-binding protein subunit gamma"/>
    <property type="match status" value="1"/>
</dbReference>
<dbReference type="Gene3D" id="4.10.260.10">
    <property type="entry name" value="Transducin (heterotrimeric G protein), gamma chain"/>
    <property type="match status" value="1"/>
</dbReference>
<dbReference type="InterPro" id="IPR015898">
    <property type="entry name" value="G-protein_gamma-like_dom"/>
</dbReference>
<dbReference type="InterPro" id="IPR036284">
    <property type="entry name" value="GGL_sf"/>
</dbReference>
<dbReference type="InterPro" id="IPR001770">
    <property type="entry name" value="Gprotein-gamma"/>
</dbReference>
<dbReference type="PANTHER" id="PTHR13809">
    <property type="entry name" value="GUANINE NUCLEOTIDE-BINDING PROTEIN GAMMA SUBUNIT"/>
    <property type="match status" value="1"/>
</dbReference>
<dbReference type="Pfam" id="PF00631">
    <property type="entry name" value="G-gamma"/>
    <property type="match status" value="1"/>
</dbReference>
<dbReference type="PRINTS" id="PR00321">
    <property type="entry name" value="GPROTEING"/>
</dbReference>
<dbReference type="SMART" id="SM01224">
    <property type="entry name" value="G_gamma"/>
    <property type="match status" value="1"/>
</dbReference>
<dbReference type="SMART" id="SM00224">
    <property type="entry name" value="GGL"/>
    <property type="match status" value="1"/>
</dbReference>
<dbReference type="SUPFAM" id="SSF48670">
    <property type="entry name" value="Transducin (heterotrimeric G protein), gamma chain"/>
    <property type="match status" value="1"/>
</dbReference>
<dbReference type="PROSITE" id="PS50058">
    <property type="entry name" value="G_PROTEIN_GAMMA"/>
    <property type="match status" value="1"/>
</dbReference>
<comment type="function">
    <text>Guanine nucleotide-binding proteins (G proteins) are involved as a modulator or transducer in various transmembrane signaling systems. The beta and gamma chains are required for the GTPase activity, for replacement of GDP by GTP, and for G protein-effector interaction.</text>
</comment>
<comment type="subunit">
    <text>G proteins are composed of 3 units, alpha, beta and gamma.</text>
</comment>
<comment type="subcellular location">
    <subcellularLocation>
        <location evidence="3">Cell membrane</location>
        <topology evidence="3">Lipid-anchor</topology>
        <orientation evidence="3">Cytoplasmic side</orientation>
    </subcellularLocation>
</comment>
<comment type="similarity">
    <text evidence="3">Belongs to the G protein gamma family.</text>
</comment>
<accession>Q9DAS9</accession>
<accession>Q544P3</accession>
<protein>
    <recommendedName>
        <fullName>Guanine nucleotide-binding protein G(I)/G(S)/G(O) subunit gamma-12</fullName>
    </recommendedName>
</protein>
<sequence length="72" mass="7997">MSSKTASTNSIAQARRTVQQLRLEASIERIKVSKASADLMSYCEEHARSDPLLMGIPTSENPFKDKKTCIIL</sequence>
<feature type="initiator methionine" description="Removed" evidence="2">
    <location>
        <position position="1"/>
    </location>
</feature>
<feature type="chain" id="PRO_0000012669" description="Guanine nucleotide-binding protein G(I)/G(S)/G(O) subunit gamma-12">
    <location>
        <begin position="2"/>
        <end position="69"/>
    </location>
</feature>
<feature type="propeptide" id="PRO_0000012670" description="Removed in mature form" evidence="1">
    <location>
        <begin position="70"/>
        <end position="72"/>
    </location>
</feature>
<feature type="modified residue" description="N-acetylserine" evidence="2">
    <location>
        <position position="2"/>
    </location>
</feature>
<feature type="modified residue" description="Phosphoserine" evidence="5">
    <location>
        <position position="10"/>
    </location>
</feature>
<feature type="modified residue" description="Phosphoserine" evidence="4">
    <location>
        <position position="26"/>
    </location>
</feature>
<feature type="modified residue" description="Phosphotyrosine" evidence="5">
    <location>
        <position position="42"/>
    </location>
</feature>
<feature type="modified residue" description="Phosphoserine" evidence="5">
    <location>
        <position position="49"/>
    </location>
</feature>
<feature type="modified residue" description="Cysteine methyl ester" evidence="1">
    <location>
        <position position="69"/>
    </location>
</feature>
<feature type="lipid moiety-binding region" description="S-geranylgeranyl cysteine" evidence="1">
    <location>
        <position position="69"/>
    </location>
</feature>
<reference key="1">
    <citation type="journal article" date="2005" name="Science">
        <title>The transcriptional landscape of the mammalian genome.</title>
        <authorList>
            <person name="Carninci P."/>
            <person name="Kasukawa T."/>
            <person name="Katayama S."/>
            <person name="Gough J."/>
            <person name="Frith M.C."/>
            <person name="Maeda N."/>
            <person name="Oyama R."/>
            <person name="Ravasi T."/>
            <person name="Lenhard B."/>
            <person name="Wells C."/>
            <person name="Kodzius R."/>
            <person name="Shimokawa K."/>
            <person name="Bajic V.B."/>
            <person name="Brenner S.E."/>
            <person name="Batalov S."/>
            <person name="Forrest A.R."/>
            <person name="Zavolan M."/>
            <person name="Davis M.J."/>
            <person name="Wilming L.G."/>
            <person name="Aidinis V."/>
            <person name="Allen J.E."/>
            <person name="Ambesi-Impiombato A."/>
            <person name="Apweiler R."/>
            <person name="Aturaliya R.N."/>
            <person name="Bailey T.L."/>
            <person name="Bansal M."/>
            <person name="Baxter L."/>
            <person name="Beisel K.W."/>
            <person name="Bersano T."/>
            <person name="Bono H."/>
            <person name="Chalk A.M."/>
            <person name="Chiu K.P."/>
            <person name="Choudhary V."/>
            <person name="Christoffels A."/>
            <person name="Clutterbuck D.R."/>
            <person name="Crowe M.L."/>
            <person name="Dalla E."/>
            <person name="Dalrymple B.P."/>
            <person name="de Bono B."/>
            <person name="Della Gatta G."/>
            <person name="di Bernardo D."/>
            <person name="Down T."/>
            <person name="Engstrom P."/>
            <person name="Fagiolini M."/>
            <person name="Faulkner G."/>
            <person name="Fletcher C.F."/>
            <person name="Fukushima T."/>
            <person name="Furuno M."/>
            <person name="Futaki S."/>
            <person name="Gariboldi M."/>
            <person name="Georgii-Hemming P."/>
            <person name="Gingeras T.R."/>
            <person name="Gojobori T."/>
            <person name="Green R.E."/>
            <person name="Gustincich S."/>
            <person name="Harbers M."/>
            <person name="Hayashi Y."/>
            <person name="Hensch T.K."/>
            <person name="Hirokawa N."/>
            <person name="Hill D."/>
            <person name="Huminiecki L."/>
            <person name="Iacono M."/>
            <person name="Ikeo K."/>
            <person name="Iwama A."/>
            <person name="Ishikawa T."/>
            <person name="Jakt M."/>
            <person name="Kanapin A."/>
            <person name="Katoh M."/>
            <person name="Kawasawa Y."/>
            <person name="Kelso J."/>
            <person name="Kitamura H."/>
            <person name="Kitano H."/>
            <person name="Kollias G."/>
            <person name="Krishnan S.P."/>
            <person name="Kruger A."/>
            <person name="Kummerfeld S.K."/>
            <person name="Kurochkin I.V."/>
            <person name="Lareau L.F."/>
            <person name="Lazarevic D."/>
            <person name="Lipovich L."/>
            <person name="Liu J."/>
            <person name="Liuni S."/>
            <person name="McWilliam S."/>
            <person name="Madan Babu M."/>
            <person name="Madera M."/>
            <person name="Marchionni L."/>
            <person name="Matsuda H."/>
            <person name="Matsuzawa S."/>
            <person name="Miki H."/>
            <person name="Mignone F."/>
            <person name="Miyake S."/>
            <person name="Morris K."/>
            <person name="Mottagui-Tabar S."/>
            <person name="Mulder N."/>
            <person name="Nakano N."/>
            <person name="Nakauchi H."/>
            <person name="Ng P."/>
            <person name="Nilsson R."/>
            <person name="Nishiguchi S."/>
            <person name="Nishikawa S."/>
            <person name="Nori F."/>
            <person name="Ohara O."/>
            <person name="Okazaki Y."/>
            <person name="Orlando V."/>
            <person name="Pang K.C."/>
            <person name="Pavan W.J."/>
            <person name="Pavesi G."/>
            <person name="Pesole G."/>
            <person name="Petrovsky N."/>
            <person name="Piazza S."/>
            <person name="Reed J."/>
            <person name="Reid J.F."/>
            <person name="Ring B.Z."/>
            <person name="Ringwald M."/>
            <person name="Rost B."/>
            <person name="Ruan Y."/>
            <person name="Salzberg S.L."/>
            <person name="Sandelin A."/>
            <person name="Schneider C."/>
            <person name="Schoenbach C."/>
            <person name="Sekiguchi K."/>
            <person name="Semple C.A."/>
            <person name="Seno S."/>
            <person name="Sessa L."/>
            <person name="Sheng Y."/>
            <person name="Shibata Y."/>
            <person name="Shimada H."/>
            <person name="Shimada K."/>
            <person name="Silva D."/>
            <person name="Sinclair B."/>
            <person name="Sperling S."/>
            <person name="Stupka E."/>
            <person name="Sugiura K."/>
            <person name="Sultana R."/>
            <person name="Takenaka Y."/>
            <person name="Taki K."/>
            <person name="Tammoja K."/>
            <person name="Tan S.L."/>
            <person name="Tang S."/>
            <person name="Taylor M.S."/>
            <person name="Tegner J."/>
            <person name="Teichmann S.A."/>
            <person name="Ueda H.R."/>
            <person name="van Nimwegen E."/>
            <person name="Verardo R."/>
            <person name="Wei C.L."/>
            <person name="Yagi K."/>
            <person name="Yamanishi H."/>
            <person name="Zabarovsky E."/>
            <person name="Zhu S."/>
            <person name="Zimmer A."/>
            <person name="Hide W."/>
            <person name="Bult C."/>
            <person name="Grimmond S.M."/>
            <person name="Teasdale R.D."/>
            <person name="Liu E.T."/>
            <person name="Brusic V."/>
            <person name="Quackenbush J."/>
            <person name="Wahlestedt C."/>
            <person name="Mattick J.S."/>
            <person name="Hume D.A."/>
            <person name="Kai C."/>
            <person name="Sasaki D."/>
            <person name="Tomaru Y."/>
            <person name="Fukuda S."/>
            <person name="Kanamori-Katayama M."/>
            <person name="Suzuki M."/>
            <person name="Aoki J."/>
            <person name="Arakawa T."/>
            <person name="Iida J."/>
            <person name="Imamura K."/>
            <person name="Itoh M."/>
            <person name="Kato T."/>
            <person name="Kawaji H."/>
            <person name="Kawagashira N."/>
            <person name="Kawashima T."/>
            <person name="Kojima M."/>
            <person name="Kondo S."/>
            <person name="Konno H."/>
            <person name="Nakano K."/>
            <person name="Ninomiya N."/>
            <person name="Nishio T."/>
            <person name="Okada M."/>
            <person name="Plessy C."/>
            <person name="Shibata K."/>
            <person name="Shiraki T."/>
            <person name="Suzuki S."/>
            <person name="Tagami M."/>
            <person name="Waki K."/>
            <person name="Watahiki A."/>
            <person name="Okamura-Oho Y."/>
            <person name="Suzuki H."/>
            <person name="Kawai J."/>
            <person name="Hayashizaki Y."/>
        </authorList>
    </citation>
    <scope>NUCLEOTIDE SEQUENCE [LARGE SCALE MRNA]</scope>
    <source>
        <strain>C57BL/6J</strain>
        <tissue>Cecum</tissue>
        <tissue>Colon</tissue>
        <tissue>Lung</tissue>
        <tissue>Mammary gland</tissue>
        <tissue>Placenta</tissue>
        <tissue>Sympathetic ganglion</tissue>
    </source>
</reference>
<reference key="2">
    <citation type="journal article" date="2004" name="Genome Res.">
        <title>The status, quality, and expansion of the NIH full-length cDNA project: the Mammalian Gene Collection (MGC).</title>
        <authorList>
            <consortium name="The MGC Project Team"/>
        </authorList>
    </citation>
    <scope>NUCLEOTIDE SEQUENCE [LARGE SCALE MRNA]</scope>
    <source>
        <strain>FVB/N-3</strain>
        <tissue>Mammary gland</tissue>
    </source>
</reference>
<reference key="3">
    <citation type="journal article" date="2009" name="Immunity">
        <title>The phagosomal proteome in interferon-gamma-activated macrophages.</title>
        <authorList>
            <person name="Trost M."/>
            <person name="English L."/>
            <person name="Lemieux S."/>
            <person name="Courcelles M."/>
            <person name="Desjardins M."/>
            <person name="Thibault P."/>
        </authorList>
    </citation>
    <scope>PHOSPHORYLATION [LARGE SCALE ANALYSIS] AT SER-26</scope>
    <scope>IDENTIFICATION BY MASS SPECTROMETRY [LARGE SCALE ANALYSIS]</scope>
</reference>
<reference key="4">
    <citation type="journal article" date="2010" name="Cell">
        <title>A tissue-specific atlas of mouse protein phosphorylation and expression.</title>
        <authorList>
            <person name="Huttlin E.L."/>
            <person name="Jedrychowski M.P."/>
            <person name="Elias J.E."/>
            <person name="Goswami T."/>
            <person name="Rad R."/>
            <person name="Beausoleil S.A."/>
            <person name="Villen J."/>
            <person name="Haas W."/>
            <person name="Sowa M.E."/>
            <person name="Gygi S.P."/>
        </authorList>
    </citation>
    <scope>PHOSPHORYLATION [LARGE SCALE ANALYSIS] AT SER-10; TYR-42 AND SER-49</scope>
    <scope>IDENTIFICATION BY MASS SPECTROMETRY [LARGE SCALE ANALYSIS]</scope>
    <source>
        <tissue>Brain</tissue>
        <tissue>Brown adipose tissue</tissue>
        <tissue>Kidney</tissue>
        <tissue>Liver</tissue>
        <tissue>Lung</tissue>
        <tissue>Pancreas</tissue>
        <tissue>Spleen</tissue>
        <tissue>Testis</tissue>
    </source>
</reference>
<name>GBG12_MOUSE</name>